<organism>
    <name type="scientific">Chromobacterium violaceum (strain ATCC 12472 / DSM 30191 / JCM 1249 / CCUG 213 / NBRC 12614 / NCIMB 9131 / NCTC 9757 / MK)</name>
    <dbReference type="NCBI Taxonomy" id="243365"/>
    <lineage>
        <taxon>Bacteria</taxon>
        <taxon>Pseudomonadati</taxon>
        <taxon>Pseudomonadota</taxon>
        <taxon>Betaproteobacteria</taxon>
        <taxon>Neisseriales</taxon>
        <taxon>Chromobacteriaceae</taxon>
        <taxon>Chromobacterium</taxon>
    </lineage>
</organism>
<evidence type="ECO:0000255" key="1">
    <source>
        <dbReference type="HAMAP-Rule" id="MF_00146"/>
    </source>
</evidence>
<sequence>MSIKSDKWIRRMADQHGMIEPFEANQVKMAADGQKLISYGTSSYGYDIRCADEFKVFTNINSTIVDPKNFDPNSFVEVSGKGYCIIPPNSFALARTVEYFRIPRSVLTVCLGKSTYARCGIIVNVTPFEPEWEGYVTLEFSNTTPLPAKIYANEGVAQVLFFESDEECDVSYKDRAGKYQGQVGVTLPRP</sequence>
<accession>Q7NS72</accession>
<proteinExistence type="inferred from homology"/>
<feature type="chain" id="PRO_0000155978" description="dCTP deaminase">
    <location>
        <begin position="1"/>
        <end position="190"/>
    </location>
</feature>
<feature type="active site" description="Proton donor/acceptor" evidence="1">
    <location>
        <position position="139"/>
    </location>
</feature>
<feature type="binding site" evidence="1">
    <location>
        <begin position="113"/>
        <end position="118"/>
    </location>
    <ligand>
        <name>dCTP</name>
        <dbReference type="ChEBI" id="CHEBI:61481"/>
    </ligand>
</feature>
<feature type="binding site" evidence="1">
    <location>
        <begin position="137"/>
        <end position="139"/>
    </location>
    <ligand>
        <name>dCTP</name>
        <dbReference type="ChEBI" id="CHEBI:61481"/>
    </ligand>
</feature>
<feature type="binding site" evidence="1">
    <location>
        <position position="158"/>
    </location>
    <ligand>
        <name>dCTP</name>
        <dbReference type="ChEBI" id="CHEBI:61481"/>
    </ligand>
</feature>
<feature type="binding site" evidence="1">
    <location>
        <position position="172"/>
    </location>
    <ligand>
        <name>dCTP</name>
        <dbReference type="ChEBI" id="CHEBI:61481"/>
    </ligand>
</feature>
<feature type="binding site" evidence="1">
    <location>
        <position position="182"/>
    </location>
    <ligand>
        <name>dCTP</name>
        <dbReference type="ChEBI" id="CHEBI:61481"/>
    </ligand>
</feature>
<gene>
    <name evidence="1" type="primary">dcd</name>
    <name type="ordered locus">CV_3554</name>
</gene>
<dbReference type="EC" id="3.5.4.13" evidence="1"/>
<dbReference type="EMBL" id="AE016825">
    <property type="protein sequence ID" value="AAQ61216.1"/>
    <property type="molecule type" value="Genomic_DNA"/>
</dbReference>
<dbReference type="RefSeq" id="WP_011137101.1">
    <property type="nucleotide sequence ID" value="NC_005085.1"/>
</dbReference>
<dbReference type="SMR" id="Q7NS72"/>
<dbReference type="STRING" id="243365.CV_3554"/>
<dbReference type="GeneID" id="66364786"/>
<dbReference type="KEGG" id="cvi:CV_3554"/>
<dbReference type="eggNOG" id="COG0717">
    <property type="taxonomic scope" value="Bacteria"/>
</dbReference>
<dbReference type="HOGENOM" id="CLU_087476_4_0_4"/>
<dbReference type="OrthoDB" id="9780956at2"/>
<dbReference type="UniPathway" id="UPA00610">
    <property type="reaction ID" value="UER00665"/>
</dbReference>
<dbReference type="Proteomes" id="UP000001424">
    <property type="component" value="Chromosome"/>
</dbReference>
<dbReference type="GO" id="GO:0008829">
    <property type="term" value="F:dCTP deaminase activity"/>
    <property type="evidence" value="ECO:0007669"/>
    <property type="project" value="UniProtKB-UniRule"/>
</dbReference>
<dbReference type="GO" id="GO:0000166">
    <property type="term" value="F:nucleotide binding"/>
    <property type="evidence" value="ECO:0007669"/>
    <property type="project" value="UniProtKB-KW"/>
</dbReference>
<dbReference type="GO" id="GO:0006226">
    <property type="term" value="P:dUMP biosynthetic process"/>
    <property type="evidence" value="ECO:0007669"/>
    <property type="project" value="UniProtKB-UniPathway"/>
</dbReference>
<dbReference type="GO" id="GO:0006229">
    <property type="term" value="P:dUTP biosynthetic process"/>
    <property type="evidence" value="ECO:0007669"/>
    <property type="project" value="UniProtKB-UniRule"/>
</dbReference>
<dbReference type="GO" id="GO:0015949">
    <property type="term" value="P:nucleobase-containing small molecule interconversion"/>
    <property type="evidence" value="ECO:0007669"/>
    <property type="project" value="TreeGrafter"/>
</dbReference>
<dbReference type="CDD" id="cd07557">
    <property type="entry name" value="trimeric_dUTPase"/>
    <property type="match status" value="1"/>
</dbReference>
<dbReference type="FunFam" id="2.70.40.10:FF:000001">
    <property type="entry name" value="dCTP deaminase"/>
    <property type="match status" value="1"/>
</dbReference>
<dbReference type="Gene3D" id="2.70.40.10">
    <property type="match status" value="1"/>
</dbReference>
<dbReference type="HAMAP" id="MF_00146">
    <property type="entry name" value="dCTP_deaminase"/>
    <property type="match status" value="1"/>
</dbReference>
<dbReference type="InterPro" id="IPR011962">
    <property type="entry name" value="dCTP_deaminase"/>
</dbReference>
<dbReference type="InterPro" id="IPR036157">
    <property type="entry name" value="dUTPase-like_sf"/>
</dbReference>
<dbReference type="InterPro" id="IPR033704">
    <property type="entry name" value="dUTPase_trimeric"/>
</dbReference>
<dbReference type="NCBIfam" id="TIGR02274">
    <property type="entry name" value="dCTP_deam"/>
    <property type="match status" value="1"/>
</dbReference>
<dbReference type="PANTHER" id="PTHR42680">
    <property type="entry name" value="DCTP DEAMINASE"/>
    <property type="match status" value="1"/>
</dbReference>
<dbReference type="PANTHER" id="PTHR42680:SF3">
    <property type="entry name" value="DCTP DEAMINASE"/>
    <property type="match status" value="1"/>
</dbReference>
<dbReference type="Pfam" id="PF22769">
    <property type="entry name" value="DCD"/>
    <property type="match status" value="1"/>
</dbReference>
<dbReference type="SUPFAM" id="SSF51283">
    <property type="entry name" value="dUTPase-like"/>
    <property type="match status" value="1"/>
</dbReference>
<keyword id="KW-0378">Hydrolase</keyword>
<keyword id="KW-0546">Nucleotide metabolism</keyword>
<keyword id="KW-0547">Nucleotide-binding</keyword>
<keyword id="KW-1185">Reference proteome</keyword>
<name>DCD_CHRVO</name>
<protein>
    <recommendedName>
        <fullName evidence="1">dCTP deaminase</fullName>
        <ecNumber evidence="1">3.5.4.13</ecNumber>
    </recommendedName>
    <alternativeName>
        <fullName evidence="1">Deoxycytidine triphosphate deaminase</fullName>
    </alternativeName>
</protein>
<comment type="function">
    <text evidence="1">Catalyzes the deamination of dCTP to dUTP.</text>
</comment>
<comment type="catalytic activity">
    <reaction evidence="1">
        <text>dCTP + H2O + H(+) = dUTP + NH4(+)</text>
        <dbReference type="Rhea" id="RHEA:22680"/>
        <dbReference type="ChEBI" id="CHEBI:15377"/>
        <dbReference type="ChEBI" id="CHEBI:15378"/>
        <dbReference type="ChEBI" id="CHEBI:28938"/>
        <dbReference type="ChEBI" id="CHEBI:61481"/>
        <dbReference type="ChEBI" id="CHEBI:61555"/>
        <dbReference type="EC" id="3.5.4.13"/>
    </reaction>
</comment>
<comment type="pathway">
    <text evidence="1">Pyrimidine metabolism; dUMP biosynthesis; dUMP from dCTP (dUTP route): step 1/2.</text>
</comment>
<comment type="subunit">
    <text evidence="1">Homotrimer.</text>
</comment>
<comment type="similarity">
    <text evidence="1">Belongs to the dCTP deaminase family.</text>
</comment>
<reference key="1">
    <citation type="journal article" date="2003" name="Proc. Natl. Acad. Sci. U.S.A.">
        <title>The complete genome sequence of Chromobacterium violaceum reveals remarkable and exploitable bacterial adaptability.</title>
        <authorList>
            <person name="Vasconcelos A.T.R."/>
            <person name="de Almeida D.F."/>
            <person name="Hungria M."/>
            <person name="Guimaraes C.T."/>
            <person name="Antonio R.V."/>
            <person name="Almeida F.C."/>
            <person name="de Almeida L.G.P."/>
            <person name="de Almeida R."/>
            <person name="Alves-Gomes J.A."/>
            <person name="Andrade E.M."/>
            <person name="Araripe J."/>
            <person name="de Araujo M.F.F."/>
            <person name="Astolfi-Filho S."/>
            <person name="Azevedo V."/>
            <person name="Baptista A.J."/>
            <person name="Bataus L.A.M."/>
            <person name="Batista J.S."/>
            <person name="Belo A."/>
            <person name="van den Berg C."/>
            <person name="Bogo M."/>
            <person name="Bonatto S."/>
            <person name="Bordignon J."/>
            <person name="Brigido M.M."/>
            <person name="Brito C.A."/>
            <person name="Brocchi M."/>
            <person name="Burity H.A."/>
            <person name="Camargo A.A."/>
            <person name="Cardoso D.D.P."/>
            <person name="Carneiro N.P."/>
            <person name="Carraro D.M."/>
            <person name="Carvalho C.M.B."/>
            <person name="Cascardo J.C.M."/>
            <person name="Cavada B.S."/>
            <person name="Chueire L.M.O."/>
            <person name="Creczynski-Pasa T.B."/>
            <person name="Cunha-Junior N.C."/>
            <person name="Fagundes N."/>
            <person name="Falcao C.L."/>
            <person name="Fantinatti F."/>
            <person name="Farias I.P."/>
            <person name="Felipe M.S.S."/>
            <person name="Ferrari L.P."/>
            <person name="Ferro J.A."/>
            <person name="Ferro M.I.T."/>
            <person name="Franco G.R."/>
            <person name="Freitas N.S.A."/>
            <person name="Furlan L.R."/>
            <person name="Gazzinelli R.T."/>
            <person name="Gomes E.A."/>
            <person name="Goncalves P.R."/>
            <person name="Grangeiro T.B."/>
            <person name="Grattapaglia D."/>
            <person name="Grisard E.C."/>
            <person name="Hanna E.S."/>
            <person name="Jardim S.N."/>
            <person name="Laurino J."/>
            <person name="Leoi L.C.T."/>
            <person name="Lima L.F.A."/>
            <person name="Loureiro M.F."/>
            <person name="Lyra M.C.C.P."/>
            <person name="Madeira H.M.F."/>
            <person name="Manfio G.P."/>
            <person name="Maranhao A.Q."/>
            <person name="Martins W.S."/>
            <person name="di Mauro S.M.Z."/>
            <person name="de Medeiros S.R.B."/>
            <person name="Meissner R.V."/>
            <person name="Moreira M.A.M."/>
            <person name="Nascimento F.F."/>
            <person name="Nicolas M.F."/>
            <person name="Oliveira J.G."/>
            <person name="Oliveira S.C."/>
            <person name="Paixao R.F.C."/>
            <person name="Parente J.A."/>
            <person name="Pedrosa F.O."/>
            <person name="Pena S.D.J."/>
            <person name="Pereira J.O."/>
            <person name="Pereira M."/>
            <person name="Pinto L.S.R.C."/>
            <person name="Pinto L.S."/>
            <person name="Porto J.I.R."/>
            <person name="Potrich D.P."/>
            <person name="Ramalho-Neto C.E."/>
            <person name="Reis A.M.M."/>
            <person name="Rigo L.U."/>
            <person name="Rondinelli E."/>
            <person name="Santos E.B.P."/>
            <person name="Santos F.R."/>
            <person name="Schneider M.P.C."/>
            <person name="Seuanez H.N."/>
            <person name="Silva A.M.R."/>
            <person name="da Silva A.L.C."/>
            <person name="Silva D.W."/>
            <person name="Silva R."/>
            <person name="Simoes I.C."/>
            <person name="Simon D."/>
            <person name="Soares C.M.A."/>
            <person name="Soares R.B.A."/>
            <person name="Souza E.M."/>
            <person name="Souza K.R.L."/>
            <person name="Souza R.C."/>
            <person name="Steffens M.B.R."/>
            <person name="Steindel M."/>
            <person name="Teixeira S.R."/>
            <person name="Urmenyi T."/>
            <person name="Vettore A."/>
            <person name="Wassem R."/>
            <person name="Zaha A."/>
            <person name="Simpson A.J.G."/>
        </authorList>
    </citation>
    <scope>NUCLEOTIDE SEQUENCE [LARGE SCALE GENOMIC DNA]</scope>
    <source>
        <strain>ATCC 12472 / DSM 30191 / JCM 1249 / CCUG 213 / NBRC 12614 / NCIMB 9131 / NCTC 9757 / MK</strain>
    </source>
</reference>